<organism>
    <name type="scientific">Gorilla gorilla gorilla</name>
    <name type="common">Western lowland gorilla</name>
    <dbReference type="NCBI Taxonomy" id="9595"/>
    <lineage>
        <taxon>Eukaryota</taxon>
        <taxon>Metazoa</taxon>
        <taxon>Chordata</taxon>
        <taxon>Craniata</taxon>
        <taxon>Vertebrata</taxon>
        <taxon>Euteleostomi</taxon>
        <taxon>Mammalia</taxon>
        <taxon>Eutheria</taxon>
        <taxon>Euarchontoglires</taxon>
        <taxon>Primates</taxon>
        <taxon>Haplorrhini</taxon>
        <taxon>Catarrhini</taxon>
        <taxon>Hominidae</taxon>
        <taxon>Gorilla</taxon>
    </lineage>
</organism>
<evidence type="ECO:0000255" key="1"/>
<evidence type="ECO:0000255" key="2">
    <source>
        <dbReference type="PROSITE-ProRule" id="PRU00521"/>
    </source>
</evidence>
<evidence type="ECO:0000305" key="3"/>
<dbReference type="EMBL" id="AF101764">
    <property type="protein sequence ID" value="AAF03340.1"/>
    <property type="molecule type" value="Genomic_DNA"/>
</dbReference>
<dbReference type="SMR" id="Q9TU86"/>
<dbReference type="FunCoup" id="Q9TU86">
    <property type="interactions" value="303"/>
</dbReference>
<dbReference type="GlyCosmos" id="Q9TU86">
    <property type="glycosylation" value="1 site, No reported glycans"/>
</dbReference>
<dbReference type="InParanoid" id="Q9TU86"/>
<dbReference type="Proteomes" id="UP000001519">
    <property type="component" value="Unplaced"/>
</dbReference>
<dbReference type="GO" id="GO:0005886">
    <property type="term" value="C:plasma membrane"/>
    <property type="evidence" value="ECO:0007669"/>
    <property type="project" value="UniProtKB-SubCell"/>
</dbReference>
<dbReference type="GO" id="GO:0004930">
    <property type="term" value="F:G protein-coupled receptor activity"/>
    <property type="evidence" value="ECO:0007669"/>
    <property type="project" value="UniProtKB-KW"/>
</dbReference>
<dbReference type="GO" id="GO:0005549">
    <property type="term" value="F:odorant binding"/>
    <property type="evidence" value="ECO:0000318"/>
    <property type="project" value="GO_Central"/>
</dbReference>
<dbReference type="GO" id="GO:0004984">
    <property type="term" value="F:olfactory receptor activity"/>
    <property type="evidence" value="ECO:0000318"/>
    <property type="project" value="GO_Central"/>
</dbReference>
<dbReference type="GO" id="GO:0007186">
    <property type="term" value="P:G protein-coupled receptor signaling pathway"/>
    <property type="evidence" value="ECO:0000318"/>
    <property type="project" value="GO_Central"/>
</dbReference>
<dbReference type="GO" id="GO:0007608">
    <property type="term" value="P:sensory perception of smell"/>
    <property type="evidence" value="ECO:0000318"/>
    <property type="project" value="GO_Central"/>
</dbReference>
<dbReference type="CDD" id="cd15918">
    <property type="entry name" value="7tmA_OR1_7-like"/>
    <property type="match status" value="1"/>
</dbReference>
<dbReference type="FunFam" id="1.20.1070.10:FF:000009">
    <property type="entry name" value="Olfactory receptor"/>
    <property type="match status" value="1"/>
</dbReference>
<dbReference type="Gene3D" id="1.20.1070.10">
    <property type="entry name" value="Rhodopsin 7-helix transmembrane proteins"/>
    <property type="match status" value="1"/>
</dbReference>
<dbReference type="InterPro" id="IPR000276">
    <property type="entry name" value="GPCR_Rhodpsn"/>
</dbReference>
<dbReference type="InterPro" id="IPR017452">
    <property type="entry name" value="GPCR_Rhodpsn_7TM"/>
</dbReference>
<dbReference type="InterPro" id="IPR000725">
    <property type="entry name" value="Olfact_rcpt"/>
</dbReference>
<dbReference type="PANTHER" id="PTHR48001">
    <property type="entry name" value="OLFACTORY RECEPTOR"/>
    <property type="match status" value="1"/>
</dbReference>
<dbReference type="Pfam" id="PF13853">
    <property type="entry name" value="7tm_4"/>
    <property type="match status" value="1"/>
</dbReference>
<dbReference type="PRINTS" id="PR00237">
    <property type="entry name" value="GPCRRHODOPSN"/>
</dbReference>
<dbReference type="PRINTS" id="PR00245">
    <property type="entry name" value="OLFACTORYR"/>
</dbReference>
<dbReference type="SUPFAM" id="SSF81321">
    <property type="entry name" value="Family A G protein-coupled receptor-like"/>
    <property type="match status" value="1"/>
</dbReference>
<dbReference type="PROSITE" id="PS00237">
    <property type="entry name" value="G_PROTEIN_RECEP_F1_1"/>
    <property type="match status" value="1"/>
</dbReference>
<dbReference type="PROSITE" id="PS50262">
    <property type="entry name" value="G_PROTEIN_RECEP_F1_2"/>
    <property type="match status" value="1"/>
</dbReference>
<proteinExistence type="inferred from homology"/>
<gene>
    <name type="primary">OR1G1</name>
</gene>
<feature type="chain" id="PRO_0000150435" description="Olfactory receptor 1G1">
    <location>
        <begin position="1"/>
        <end position="313"/>
    </location>
</feature>
<feature type="topological domain" description="Extracellular" evidence="1">
    <location>
        <begin position="1"/>
        <end position="25"/>
    </location>
</feature>
<feature type="transmembrane region" description="Helical; Name=1" evidence="1">
    <location>
        <begin position="26"/>
        <end position="49"/>
    </location>
</feature>
<feature type="topological domain" description="Cytoplasmic" evidence="1">
    <location>
        <begin position="50"/>
        <end position="57"/>
    </location>
</feature>
<feature type="transmembrane region" description="Helical; Name=2" evidence="1">
    <location>
        <begin position="58"/>
        <end position="79"/>
    </location>
</feature>
<feature type="topological domain" description="Extracellular" evidence="1">
    <location>
        <begin position="80"/>
        <end position="100"/>
    </location>
</feature>
<feature type="transmembrane region" description="Helical; Name=3" evidence="1">
    <location>
        <begin position="101"/>
        <end position="120"/>
    </location>
</feature>
<feature type="topological domain" description="Cytoplasmic" evidence="1">
    <location>
        <begin position="121"/>
        <end position="140"/>
    </location>
</feature>
<feature type="transmembrane region" description="Helical; Name=4" evidence="1">
    <location>
        <begin position="141"/>
        <end position="158"/>
    </location>
</feature>
<feature type="topological domain" description="Extracellular" evidence="1">
    <location>
        <begin position="159"/>
        <end position="196"/>
    </location>
</feature>
<feature type="transmembrane region" description="Helical; Name=5" evidence="1">
    <location>
        <begin position="197"/>
        <end position="219"/>
    </location>
</feature>
<feature type="topological domain" description="Cytoplasmic" evidence="1">
    <location>
        <begin position="220"/>
        <end position="236"/>
    </location>
</feature>
<feature type="transmembrane region" description="Helical; Name=6" evidence="1">
    <location>
        <begin position="237"/>
        <end position="259"/>
    </location>
</feature>
<feature type="topological domain" description="Extracellular" evidence="1">
    <location>
        <begin position="260"/>
        <end position="272"/>
    </location>
</feature>
<feature type="transmembrane region" description="Helical; Name=7" evidence="1">
    <location>
        <begin position="273"/>
        <end position="292"/>
    </location>
</feature>
<feature type="topological domain" description="Cytoplasmic" evidence="1">
    <location>
        <begin position="293"/>
        <end position="313"/>
    </location>
</feature>
<feature type="glycosylation site" description="N-linked (GlcNAc...) asparagine" evidence="1">
    <location>
        <position position="5"/>
    </location>
</feature>
<feature type="disulfide bond" evidence="2">
    <location>
        <begin position="97"/>
        <end position="189"/>
    </location>
</feature>
<reference key="1">
    <citation type="journal article" date="1999" name="Genomics">
        <title>Primate evolution of an olfactory receptor cluster: diversification by gene conversion and recent emergence of pseudogenes.</title>
        <authorList>
            <person name="Sharon D."/>
            <person name="Glusman G."/>
            <person name="Pilpel Y."/>
            <person name="Khen M."/>
            <person name="Gruetzner F."/>
            <person name="Haaf T."/>
            <person name="Lancet D."/>
        </authorList>
    </citation>
    <scope>NUCLEOTIDE SEQUENCE [GENOMIC DNA]</scope>
</reference>
<accession>Q9TU86</accession>
<comment type="function">
    <text evidence="3">Odorant receptor.</text>
</comment>
<comment type="subcellular location">
    <subcellularLocation>
        <location>Cell membrane</location>
        <topology>Multi-pass membrane protein</topology>
    </subcellularLocation>
</comment>
<comment type="similarity">
    <text evidence="2">Belongs to the G-protein coupled receptor 1 family.</text>
</comment>
<protein>
    <recommendedName>
        <fullName>Olfactory receptor 1G1</fullName>
    </recommendedName>
</protein>
<sequence>MEGKNLTSISEFFLLGFSEQLEEQKALFGSFLFMYLVTVAGNLLIILVIITDTQLHTPMYFFLANLSLADACFVSTTVPKMLANIQIQSQAISYSGCLLQLYFFMLFVMLEAFLLAVMAYDRYVAICHPLHYILIMSPGLCVFLVSASWIMNALHSLLHTLLMNSLSFCANHEIPHFFCDIDPLLSLSCTDPFTNELVIFITGGLTGLVCVLCLIISYTNIFSTILKIPSAQGKRKAFSTCGSHLSVVSLFFGTSFCVYFIPPSTRSAQKDTVASVMYTVVTPMLNPFIYSLRNQEIKSSLRKLIWVREIHSP</sequence>
<name>OR1G1_GORGO</name>
<keyword id="KW-1003">Cell membrane</keyword>
<keyword id="KW-1015">Disulfide bond</keyword>
<keyword id="KW-0297">G-protein coupled receptor</keyword>
<keyword id="KW-0325">Glycoprotein</keyword>
<keyword id="KW-0472">Membrane</keyword>
<keyword id="KW-0552">Olfaction</keyword>
<keyword id="KW-0675">Receptor</keyword>
<keyword id="KW-1185">Reference proteome</keyword>
<keyword id="KW-0716">Sensory transduction</keyword>
<keyword id="KW-0807">Transducer</keyword>
<keyword id="KW-0812">Transmembrane</keyword>
<keyword id="KW-1133">Transmembrane helix</keyword>